<proteinExistence type="inferred from homology"/>
<evidence type="ECO:0000255" key="1">
    <source>
        <dbReference type="HAMAP-Rule" id="MF_01659"/>
    </source>
</evidence>
<protein>
    <recommendedName>
        <fullName evidence="1">2-succinyl-5-enolpyruvyl-6-hydroxy-3-cyclohexene-1-carboxylate synthase</fullName>
        <shortName evidence="1">SEPHCHC synthase</shortName>
        <ecNumber evidence="1">2.2.1.9</ecNumber>
    </recommendedName>
    <alternativeName>
        <fullName evidence="1">Menaquinone biosynthesis protein MenD</fullName>
    </alternativeName>
</protein>
<comment type="function">
    <text evidence="1">Catalyzes the thiamine diphosphate-dependent decarboxylation of 2-oxoglutarate and the subsequent addition of the resulting succinic semialdehyde-thiamine pyrophosphate anion to isochorismate to yield 2-succinyl-5-enolpyruvyl-6-hydroxy-3-cyclohexene-1-carboxylate (SEPHCHC).</text>
</comment>
<comment type="catalytic activity">
    <reaction evidence="1">
        <text>isochorismate + 2-oxoglutarate + H(+) = 5-enolpyruvoyl-6-hydroxy-2-succinyl-cyclohex-3-ene-1-carboxylate + CO2</text>
        <dbReference type="Rhea" id="RHEA:25593"/>
        <dbReference type="ChEBI" id="CHEBI:15378"/>
        <dbReference type="ChEBI" id="CHEBI:16526"/>
        <dbReference type="ChEBI" id="CHEBI:16810"/>
        <dbReference type="ChEBI" id="CHEBI:29780"/>
        <dbReference type="ChEBI" id="CHEBI:58818"/>
        <dbReference type="EC" id="2.2.1.9"/>
    </reaction>
</comment>
<comment type="cofactor">
    <cofactor evidence="1">
        <name>Mg(2+)</name>
        <dbReference type="ChEBI" id="CHEBI:18420"/>
    </cofactor>
    <cofactor evidence="1">
        <name>Mn(2+)</name>
        <dbReference type="ChEBI" id="CHEBI:29035"/>
    </cofactor>
</comment>
<comment type="cofactor">
    <cofactor evidence="1">
        <name>thiamine diphosphate</name>
        <dbReference type="ChEBI" id="CHEBI:58937"/>
    </cofactor>
    <text evidence="1">Binds 1 thiamine pyrophosphate per subunit.</text>
</comment>
<comment type="pathway">
    <text evidence="1">Quinol/quinone metabolism; 1,4-dihydroxy-2-naphthoate biosynthesis; 1,4-dihydroxy-2-naphthoate from chorismate: step 2/7.</text>
</comment>
<comment type="pathway">
    <text evidence="1">Quinol/quinone metabolism; menaquinone biosynthesis.</text>
</comment>
<comment type="subunit">
    <text evidence="1">Homodimer.</text>
</comment>
<comment type="similarity">
    <text evidence="1">Belongs to the TPP enzyme family. MenD subfamily.</text>
</comment>
<name>MEND_CHLL2</name>
<dbReference type="EC" id="2.2.1.9" evidence="1"/>
<dbReference type="EMBL" id="CP001097">
    <property type="protein sequence ID" value="ACD91077.1"/>
    <property type="molecule type" value="Genomic_DNA"/>
</dbReference>
<dbReference type="RefSeq" id="WP_012466946.1">
    <property type="nucleotide sequence ID" value="NC_010803.1"/>
</dbReference>
<dbReference type="SMR" id="B3EG68"/>
<dbReference type="STRING" id="290315.Clim_2048"/>
<dbReference type="KEGG" id="cli:Clim_2048"/>
<dbReference type="eggNOG" id="COG1165">
    <property type="taxonomic scope" value="Bacteria"/>
</dbReference>
<dbReference type="HOGENOM" id="CLU_006051_3_0_10"/>
<dbReference type="OrthoDB" id="9791859at2"/>
<dbReference type="UniPathway" id="UPA00079"/>
<dbReference type="UniPathway" id="UPA01057">
    <property type="reaction ID" value="UER00164"/>
</dbReference>
<dbReference type="Proteomes" id="UP000008841">
    <property type="component" value="Chromosome"/>
</dbReference>
<dbReference type="GO" id="GO:0070204">
    <property type="term" value="F:2-succinyl-5-enolpyruvyl-6-hydroxy-3-cyclohexene-1-carboxylic-acid synthase activity"/>
    <property type="evidence" value="ECO:0007669"/>
    <property type="project" value="UniProtKB-UniRule"/>
</dbReference>
<dbReference type="GO" id="GO:0000287">
    <property type="term" value="F:magnesium ion binding"/>
    <property type="evidence" value="ECO:0007669"/>
    <property type="project" value="UniProtKB-UniRule"/>
</dbReference>
<dbReference type="GO" id="GO:0030145">
    <property type="term" value="F:manganese ion binding"/>
    <property type="evidence" value="ECO:0007669"/>
    <property type="project" value="UniProtKB-UniRule"/>
</dbReference>
<dbReference type="GO" id="GO:0030976">
    <property type="term" value="F:thiamine pyrophosphate binding"/>
    <property type="evidence" value="ECO:0007669"/>
    <property type="project" value="UniProtKB-UniRule"/>
</dbReference>
<dbReference type="GO" id="GO:0009234">
    <property type="term" value="P:menaquinone biosynthetic process"/>
    <property type="evidence" value="ECO:0007669"/>
    <property type="project" value="UniProtKB-UniRule"/>
</dbReference>
<dbReference type="CDD" id="cd07037">
    <property type="entry name" value="TPP_PYR_MenD"/>
    <property type="match status" value="1"/>
</dbReference>
<dbReference type="CDD" id="cd02009">
    <property type="entry name" value="TPP_SHCHC_synthase"/>
    <property type="match status" value="1"/>
</dbReference>
<dbReference type="Gene3D" id="3.40.50.970">
    <property type="match status" value="2"/>
</dbReference>
<dbReference type="Gene3D" id="3.40.50.1220">
    <property type="entry name" value="TPP-binding domain"/>
    <property type="match status" value="1"/>
</dbReference>
<dbReference type="HAMAP" id="MF_01659">
    <property type="entry name" value="MenD"/>
    <property type="match status" value="1"/>
</dbReference>
<dbReference type="InterPro" id="IPR029035">
    <property type="entry name" value="DHS-like_NAD/FAD-binding_dom"/>
</dbReference>
<dbReference type="InterPro" id="IPR004433">
    <property type="entry name" value="MenaQ_synth_MenD"/>
</dbReference>
<dbReference type="InterPro" id="IPR032264">
    <property type="entry name" value="MenD_middle"/>
</dbReference>
<dbReference type="InterPro" id="IPR029061">
    <property type="entry name" value="THDP-binding"/>
</dbReference>
<dbReference type="InterPro" id="IPR012001">
    <property type="entry name" value="Thiamin_PyroP_enz_TPP-bd_dom"/>
</dbReference>
<dbReference type="InterPro" id="IPR011766">
    <property type="entry name" value="TPP_enzyme_TPP-bd"/>
</dbReference>
<dbReference type="NCBIfam" id="TIGR00173">
    <property type="entry name" value="menD"/>
    <property type="match status" value="1"/>
</dbReference>
<dbReference type="PANTHER" id="PTHR42916">
    <property type="entry name" value="2-SUCCINYL-5-ENOLPYRUVYL-6-HYDROXY-3-CYCLOHEXENE-1-CARBOXYLATE SYNTHASE"/>
    <property type="match status" value="1"/>
</dbReference>
<dbReference type="PANTHER" id="PTHR42916:SF1">
    <property type="entry name" value="PROTEIN PHYLLO, CHLOROPLASTIC"/>
    <property type="match status" value="1"/>
</dbReference>
<dbReference type="Pfam" id="PF02775">
    <property type="entry name" value="TPP_enzyme_C"/>
    <property type="match status" value="1"/>
</dbReference>
<dbReference type="Pfam" id="PF16582">
    <property type="entry name" value="TPP_enzyme_M_2"/>
    <property type="match status" value="1"/>
</dbReference>
<dbReference type="Pfam" id="PF02776">
    <property type="entry name" value="TPP_enzyme_N"/>
    <property type="match status" value="1"/>
</dbReference>
<dbReference type="PIRSF" id="PIRSF004983">
    <property type="entry name" value="MenD"/>
    <property type="match status" value="1"/>
</dbReference>
<dbReference type="SUPFAM" id="SSF52467">
    <property type="entry name" value="DHS-like NAD/FAD-binding domain"/>
    <property type="match status" value="1"/>
</dbReference>
<dbReference type="SUPFAM" id="SSF52518">
    <property type="entry name" value="Thiamin diphosphate-binding fold (THDP-binding)"/>
    <property type="match status" value="2"/>
</dbReference>
<reference key="1">
    <citation type="submission" date="2008-05" db="EMBL/GenBank/DDBJ databases">
        <title>Complete sequence of Chlorobium limicola DSM 245.</title>
        <authorList>
            <consortium name="US DOE Joint Genome Institute"/>
            <person name="Lucas S."/>
            <person name="Copeland A."/>
            <person name="Lapidus A."/>
            <person name="Glavina del Rio T."/>
            <person name="Dalin E."/>
            <person name="Tice H."/>
            <person name="Bruce D."/>
            <person name="Goodwin L."/>
            <person name="Pitluck S."/>
            <person name="Schmutz J."/>
            <person name="Larimer F."/>
            <person name="Land M."/>
            <person name="Hauser L."/>
            <person name="Kyrpides N."/>
            <person name="Ovchinnikova G."/>
            <person name="Zhao F."/>
            <person name="Li T."/>
            <person name="Liu Z."/>
            <person name="Overmann J."/>
            <person name="Bryant D.A."/>
            <person name="Richardson P."/>
        </authorList>
    </citation>
    <scope>NUCLEOTIDE SEQUENCE [LARGE SCALE GENOMIC DNA]</scope>
    <source>
        <strain>DSM 245 / NBRC 103803 / 6330</strain>
    </source>
</reference>
<keyword id="KW-0460">Magnesium</keyword>
<keyword id="KW-0464">Manganese</keyword>
<keyword id="KW-0474">Menaquinone biosynthesis</keyword>
<keyword id="KW-0479">Metal-binding</keyword>
<keyword id="KW-0786">Thiamine pyrophosphate</keyword>
<keyword id="KW-0808">Transferase</keyword>
<accession>B3EG68</accession>
<gene>
    <name evidence="1" type="primary">menD</name>
    <name type="ordered locus">Clim_2048</name>
</gene>
<sequence>MNNREITSLWSRIIIEELVRLGAGFFCISPGSRSTPLTVAAARHPEAAWKMFPDERSAGFFALGYARATQKPAVLICTSGTAVANYYPAVVEASMDCQPMLILSADRPFELLETGANQTIQQFGIFGGYSRWNFRLPEPSSDVPLRSVITAIDHAVSSATGSLPGPVHINVPFREPFEPLDPDLHDPWLAPVSEWIDTSTPLCRTLSQERVPNRESISSLRKIIAESKLPFMIAGRLNNRSDSLAVGNLARSLNIPLYADLSSGLRLDSSFNPLQLAFQSSQFPERFRPDTVIHFGGPLVARQPSAAVRMWNPRNHIVIKPHANRFGPDHNITLSIEASPALIAEALLGCRTPLPSGCQPLPEPFFQQAKAEIDICCLPDHPVSEISAARIVSSLVTPESGLFLSNSMPVRDMDLYASPSASRPFMTGMNRGASGIDGIISTAAGFAKGLRKPVTLMIGDIAFLHDLNALSLLPSLQVPLCIVVLNNNGGGIFSFLPVASEKDVFETCFATPQSYSIKAAAETFGIESSRPATNRDFEECCRKAAESDRCSIIEVKGNRRNNVELHRTLQSKITALGASYLSR</sequence>
<feature type="chain" id="PRO_1000187060" description="2-succinyl-5-enolpyruvyl-6-hydroxy-3-cyclohexene-1-carboxylate synthase">
    <location>
        <begin position="1"/>
        <end position="583"/>
    </location>
</feature>
<organism>
    <name type="scientific">Chlorobium limicola (strain DSM 245 / NBRC 103803 / 6330)</name>
    <dbReference type="NCBI Taxonomy" id="290315"/>
    <lineage>
        <taxon>Bacteria</taxon>
        <taxon>Pseudomonadati</taxon>
        <taxon>Chlorobiota</taxon>
        <taxon>Chlorobiia</taxon>
        <taxon>Chlorobiales</taxon>
        <taxon>Chlorobiaceae</taxon>
        <taxon>Chlorobium/Pelodictyon group</taxon>
        <taxon>Chlorobium</taxon>
    </lineage>
</organism>